<comment type="function">
    <text evidence="1">Catalyzes the hydrolysis of glutamine to glutamate and ammonia as part of the biosynthesis of pyridoxal 5'-phosphate. The resulting ammonia molecule is channeled to the active site of PdxS.</text>
</comment>
<comment type="catalytic activity">
    <reaction evidence="1">
        <text>aldehydo-D-ribose 5-phosphate + D-glyceraldehyde 3-phosphate + L-glutamine = pyridoxal 5'-phosphate + L-glutamate + phosphate + 3 H2O + H(+)</text>
        <dbReference type="Rhea" id="RHEA:31507"/>
        <dbReference type="ChEBI" id="CHEBI:15377"/>
        <dbReference type="ChEBI" id="CHEBI:15378"/>
        <dbReference type="ChEBI" id="CHEBI:29985"/>
        <dbReference type="ChEBI" id="CHEBI:43474"/>
        <dbReference type="ChEBI" id="CHEBI:58273"/>
        <dbReference type="ChEBI" id="CHEBI:58359"/>
        <dbReference type="ChEBI" id="CHEBI:59776"/>
        <dbReference type="ChEBI" id="CHEBI:597326"/>
        <dbReference type="EC" id="4.3.3.6"/>
    </reaction>
</comment>
<comment type="catalytic activity">
    <reaction evidence="1">
        <text>L-glutamine + H2O = L-glutamate + NH4(+)</text>
        <dbReference type="Rhea" id="RHEA:15889"/>
        <dbReference type="ChEBI" id="CHEBI:15377"/>
        <dbReference type="ChEBI" id="CHEBI:28938"/>
        <dbReference type="ChEBI" id="CHEBI:29985"/>
        <dbReference type="ChEBI" id="CHEBI:58359"/>
        <dbReference type="EC" id="3.5.1.2"/>
    </reaction>
</comment>
<comment type="pathway">
    <text evidence="1">Cofactor biosynthesis; pyridoxal 5'-phosphate biosynthesis.</text>
</comment>
<comment type="subunit">
    <text evidence="1">In the presence of PdxS, forms a dodecamer of heterodimers. Only shows activity in the heterodimer.</text>
</comment>
<comment type="similarity">
    <text evidence="1">Belongs to the glutaminase PdxT/SNO family.</text>
</comment>
<evidence type="ECO:0000255" key="1">
    <source>
        <dbReference type="HAMAP-Rule" id="MF_01615"/>
    </source>
</evidence>
<keyword id="KW-0315">Glutamine amidotransferase</keyword>
<keyword id="KW-0378">Hydrolase</keyword>
<keyword id="KW-0456">Lyase</keyword>
<keyword id="KW-0663">Pyridoxal phosphate</keyword>
<keyword id="KW-1185">Reference proteome</keyword>
<reference key="1">
    <citation type="journal article" date="2004" name="Mol. Plant Microbe Interact.">
        <title>The genome sequence of the Gram-positive sugarcane pathogen Leifsonia xyli subsp. xyli.</title>
        <authorList>
            <person name="Monteiro-Vitorello C.B."/>
            <person name="Camargo L.E.A."/>
            <person name="Van Sluys M.A."/>
            <person name="Kitajima J.P."/>
            <person name="Truffi D."/>
            <person name="do Amaral A.M."/>
            <person name="Harakava R."/>
            <person name="de Oliveira J.C.F."/>
            <person name="Wood D."/>
            <person name="de Oliveira M.C."/>
            <person name="Miyaki C.Y."/>
            <person name="Takita M.A."/>
            <person name="da Silva A.C.R."/>
            <person name="Furlan L.R."/>
            <person name="Carraro D.M."/>
            <person name="Camarotte G."/>
            <person name="Almeida N.F. Jr."/>
            <person name="Carrer H."/>
            <person name="Coutinho L.L."/>
            <person name="El-Dorry H.A."/>
            <person name="Ferro M.I.T."/>
            <person name="Gagliardi P.R."/>
            <person name="Giglioti E."/>
            <person name="Goldman M.H.S."/>
            <person name="Goldman G.H."/>
            <person name="Kimura E.T."/>
            <person name="Ferro E.S."/>
            <person name="Kuramae E.E."/>
            <person name="Lemos E.G.M."/>
            <person name="Lemos M.V.F."/>
            <person name="Mauro S.M.Z."/>
            <person name="Machado M.A."/>
            <person name="Marino C.L."/>
            <person name="Menck C.F."/>
            <person name="Nunes L.R."/>
            <person name="Oliveira R.C."/>
            <person name="Pereira G.G."/>
            <person name="Siqueira W."/>
            <person name="de Souza A.A."/>
            <person name="Tsai S.M."/>
            <person name="Zanca A.S."/>
            <person name="Simpson A.J.G."/>
            <person name="Brumbley S.M."/>
            <person name="Setubal J.C."/>
        </authorList>
    </citation>
    <scope>NUCLEOTIDE SEQUENCE [LARGE SCALE GENOMIC DNA]</scope>
    <source>
        <strain>CTCB07</strain>
    </source>
</reference>
<name>PDXT_LEIXX</name>
<organism>
    <name type="scientific">Leifsonia xyli subsp. xyli (strain CTCB07)</name>
    <dbReference type="NCBI Taxonomy" id="281090"/>
    <lineage>
        <taxon>Bacteria</taxon>
        <taxon>Bacillati</taxon>
        <taxon>Actinomycetota</taxon>
        <taxon>Actinomycetes</taxon>
        <taxon>Micrococcales</taxon>
        <taxon>Microbacteriaceae</taxon>
        <taxon>Leifsonia</taxon>
    </lineage>
</organism>
<feature type="chain" id="PRO_0000135642" description="Pyridoxal 5'-phosphate synthase subunit PdxT">
    <location>
        <begin position="1"/>
        <end position="198"/>
    </location>
</feature>
<feature type="active site" description="Nucleophile" evidence="1">
    <location>
        <position position="82"/>
    </location>
</feature>
<feature type="active site" description="Charge relay system" evidence="1">
    <location>
        <position position="177"/>
    </location>
</feature>
<feature type="active site" description="Charge relay system" evidence="1">
    <location>
        <position position="179"/>
    </location>
</feature>
<feature type="binding site" evidence="1">
    <location>
        <begin position="50"/>
        <end position="52"/>
    </location>
    <ligand>
        <name>L-glutamine</name>
        <dbReference type="ChEBI" id="CHEBI:58359"/>
    </ligand>
</feature>
<feature type="binding site" evidence="1">
    <location>
        <position position="111"/>
    </location>
    <ligand>
        <name>L-glutamine</name>
        <dbReference type="ChEBI" id="CHEBI:58359"/>
    </ligand>
</feature>
<feature type="binding site" evidence="1">
    <location>
        <begin position="140"/>
        <end position="141"/>
    </location>
    <ligand>
        <name>L-glutamine</name>
        <dbReference type="ChEBI" id="CHEBI:58359"/>
    </ligand>
</feature>
<gene>
    <name evidence="1" type="primary">pdxT</name>
    <name type="ordered locus">Lxx10740</name>
</gene>
<proteinExistence type="inferred from homology"/>
<protein>
    <recommendedName>
        <fullName evidence="1">Pyridoxal 5'-phosphate synthase subunit PdxT</fullName>
        <ecNumber evidence="1">4.3.3.6</ecNumber>
    </recommendedName>
    <alternativeName>
        <fullName evidence="1">Pdx2</fullName>
    </alternativeName>
    <alternativeName>
        <fullName evidence="1">Pyridoxal 5'-phosphate synthase glutaminase subunit</fullName>
        <ecNumber evidence="1">3.5.1.2</ecNumber>
    </alternativeName>
</protein>
<sequence length="198" mass="20825">MAGSPRVGVLALQGDVREHLTVLWALGADAVRVRRPDELETVAGLVIPGGESSVMDKLARTVGLAGPLRNAIAGGLPVYGTCAGLIMLADTIVDGIAGQRSLGGLDVAVRRNAFGSQAESFETDLSFPTLGAEPMHAVFIRAPIVESVGPRATVLARVPDGRVVAVEQDNLLGTAFHPELSGDKRFHEYFLVKVHGRV</sequence>
<dbReference type="EC" id="4.3.3.6" evidence="1"/>
<dbReference type="EC" id="3.5.1.2" evidence="1"/>
<dbReference type="EMBL" id="AE016822">
    <property type="protein sequence ID" value="AAT88927.1"/>
    <property type="molecule type" value="Genomic_DNA"/>
</dbReference>
<dbReference type="RefSeq" id="WP_011185923.1">
    <property type="nucleotide sequence ID" value="NC_006087.1"/>
</dbReference>
<dbReference type="SMR" id="Q6AFB8"/>
<dbReference type="STRING" id="281090.Lxx10740"/>
<dbReference type="KEGG" id="lxx:Lxx10740"/>
<dbReference type="eggNOG" id="COG0311">
    <property type="taxonomic scope" value="Bacteria"/>
</dbReference>
<dbReference type="HOGENOM" id="CLU_069674_2_0_11"/>
<dbReference type="UniPathway" id="UPA00245"/>
<dbReference type="Proteomes" id="UP000001306">
    <property type="component" value="Chromosome"/>
</dbReference>
<dbReference type="GO" id="GO:0005829">
    <property type="term" value="C:cytosol"/>
    <property type="evidence" value="ECO:0007669"/>
    <property type="project" value="TreeGrafter"/>
</dbReference>
<dbReference type="GO" id="GO:1903600">
    <property type="term" value="C:glutaminase complex"/>
    <property type="evidence" value="ECO:0007669"/>
    <property type="project" value="TreeGrafter"/>
</dbReference>
<dbReference type="GO" id="GO:0004359">
    <property type="term" value="F:glutaminase activity"/>
    <property type="evidence" value="ECO:0007669"/>
    <property type="project" value="UniProtKB-UniRule"/>
</dbReference>
<dbReference type="GO" id="GO:0036381">
    <property type="term" value="F:pyridoxal 5'-phosphate synthase (glutamine hydrolysing) activity"/>
    <property type="evidence" value="ECO:0007669"/>
    <property type="project" value="UniProtKB-UniRule"/>
</dbReference>
<dbReference type="GO" id="GO:0006543">
    <property type="term" value="P:glutamine catabolic process"/>
    <property type="evidence" value="ECO:0007669"/>
    <property type="project" value="UniProtKB-UniRule"/>
</dbReference>
<dbReference type="GO" id="GO:0042823">
    <property type="term" value="P:pyridoxal phosphate biosynthetic process"/>
    <property type="evidence" value="ECO:0007669"/>
    <property type="project" value="UniProtKB-UniRule"/>
</dbReference>
<dbReference type="GO" id="GO:0008614">
    <property type="term" value="P:pyridoxine metabolic process"/>
    <property type="evidence" value="ECO:0007669"/>
    <property type="project" value="TreeGrafter"/>
</dbReference>
<dbReference type="CDD" id="cd01749">
    <property type="entry name" value="GATase1_PB"/>
    <property type="match status" value="1"/>
</dbReference>
<dbReference type="FunFam" id="3.40.50.880:FF:000010">
    <property type="entry name" value="uncharacterized protein LOC100176842 isoform X2"/>
    <property type="match status" value="1"/>
</dbReference>
<dbReference type="Gene3D" id="3.40.50.880">
    <property type="match status" value="1"/>
</dbReference>
<dbReference type="HAMAP" id="MF_01615">
    <property type="entry name" value="PdxT"/>
    <property type="match status" value="1"/>
</dbReference>
<dbReference type="InterPro" id="IPR029062">
    <property type="entry name" value="Class_I_gatase-like"/>
</dbReference>
<dbReference type="InterPro" id="IPR002161">
    <property type="entry name" value="PdxT/SNO"/>
</dbReference>
<dbReference type="InterPro" id="IPR021196">
    <property type="entry name" value="PdxT/SNO_CS"/>
</dbReference>
<dbReference type="NCBIfam" id="TIGR03800">
    <property type="entry name" value="PLP_synth_Pdx2"/>
    <property type="match status" value="1"/>
</dbReference>
<dbReference type="PANTHER" id="PTHR31559">
    <property type="entry name" value="PYRIDOXAL 5'-PHOSPHATE SYNTHASE SUBUNIT SNO"/>
    <property type="match status" value="1"/>
</dbReference>
<dbReference type="PANTHER" id="PTHR31559:SF0">
    <property type="entry name" value="PYRIDOXAL 5'-PHOSPHATE SYNTHASE SUBUNIT SNO1-RELATED"/>
    <property type="match status" value="1"/>
</dbReference>
<dbReference type="Pfam" id="PF01174">
    <property type="entry name" value="SNO"/>
    <property type="match status" value="1"/>
</dbReference>
<dbReference type="PIRSF" id="PIRSF005639">
    <property type="entry name" value="Glut_amidoT_SNO"/>
    <property type="match status" value="1"/>
</dbReference>
<dbReference type="SUPFAM" id="SSF52317">
    <property type="entry name" value="Class I glutamine amidotransferase-like"/>
    <property type="match status" value="1"/>
</dbReference>
<dbReference type="PROSITE" id="PS01236">
    <property type="entry name" value="PDXT_SNO_1"/>
    <property type="match status" value="1"/>
</dbReference>
<dbReference type="PROSITE" id="PS51130">
    <property type="entry name" value="PDXT_SNO_2"/>
    <property type="match status" value="1"/>
</dbReference>
<accession>Q6AFB8</accession>